<feature type="chain" id="PRO_0000178932" description="UDP-N-acetylglucosamine 1-carboxyvinyltransferase 1">
    <location>
        <begin position="1"/>
        <end position="427"/>
    </location>
</feature>
<feature type="active site" description="Proton donor" evidence="1">
    <location>
        <position position="120"/>
    </location>
</feature>
<feature type="binding site" evidence="1">
    <location>
        <begin position="23"/>
        <end position="24"/>
    </location>
    <ligand>
        <name>phosphoenolpyruvate</name>
        <dbReference type="ChEBI" id="CHEBI:58702"/>
    </ligand>
</feature>
<feature type="binding site" evidence="1">
    <location>
        <position position="96"/>
    </location>
    <ligand>
        <name>UDP-N-acetyl-alpha-D-glucosamine</name>
        <dbReference type="ChEBI" id="CHEBI:57705"/>
    </ligand>
</feature>
<feature type="binding site" evidence="1">
    <location>
        <begin position="125"/>
        <end position="129"/>
    </location>
    <ligand>
        <name>UDP-N-acetyl-alpha-D-glucosamine</name>
        <dbReference type="ChEBI" id="CHEBI:57705"/>
    </ligand>
</feature>
<feature type="binding site" evidence="1">
    <location>
        <position position="309"/>
    </location>
    <ligand>
        <name>UDP-N-acetyl-alpha-D-glucosamine</name>
        <dbReference type="ChEBI" id="CHEBI:57705"/>
    </ligand>
</feature>
<feature type="binding site" evidence="1">
    <location>
        <position position="331"/>
    </location>
    <ligand>
        <name>UDP-N-acetyl-alpha-D-glucosamine</name>
        <dbReference type="ChEBI" id="CHEBI:57705"/>
    </ligand>
</feature>
<feature type="modified residue" description="2-(S-cysteinyl)pyruvic acid O-phosphothioketal" evidence="1">
    <location>
        <position position="120"/>
    </location>
</feature>
<reference key="1">
    <citation type="journal article" date="2001" name="J. Bacteriol.">
        <title>Genome of the bacterium Streptococcus pneumoniae strain R6.</title>
        <authorList>
            <person name="Hoskins J."/>
            <person name="Alborn W.E. Jr."/>
            <person name="Arnold J."/>
            <person name="Blaszczak L.C."/>
            <person name="Burgett S."/>
            <person name="DeHoff B.S."/>
            <person name="Estrem S.T."/>
            <person name="Fritz L."/>
            <person name="Fu D.-J."/>
            <person name="Fuller W."/>
            <person name="Geringer C."/>
            <person name="Gilmour R."/>
            <person name="Glass J.S."/>
            <person name="Khoja H."/>
            <person name="Kraft A.R."/>
            <person name="Lagace R.E."/>
            <person name="LeBlanc D.J."/>
            <person name="Lee L.N."/>
            <person name="Lefkowitz E.J."/>
            <person name="Lu J."/>
            <person name="Matsushima P."/>
            <person name="McAhren S.M."/>
            <person name="McHenney M."/>
            <person name="McLeaster K."/>
            <person name="Mundy C.W."/>
            <person name="Nicas T.I."/>
            <person name="Norris F.H."/>
            <person name="O'Gara M."/>
            <person name="Peery R.B."/>
            <person name="Robertson G.T."/>
            <person name="Rockey P."/>
            <person name="Sun P.-M."/>
            <person name="Winkler M.E."/>
            <person name="Yang Y."/>
            <person name="Young-Bellido M."/>
            <person name="Zhao G."/>
            <person name="Zook C.A."/>
            <person name="Baltz R.H."/>
            <person name="Jaskunas S.R."/>
            <person name="Rosteck P.R. Jr."/>
            <person name="Skatrud P.L."/>
            <person name="Glass J.I."/>
        </authorList>
    </citation>
    <scope>NUCLEOTIDE SEQUENCE [LARGE SCALE GENOMIC DNA]</scope>
    <source>
        <strain>ATCC BAA-255 / R6</strain>
    </source>
</reference>
<name>MURA1_STRR6</name>
<sequence length="427" mass="45895">MDKIVVQGGDNRLVGSVTIEGAKNAVLPLLAATILASEGKTVLQNVPILSDVFIMNQVVGGLNAKVDFDEEAHLVKVDATGDITEEAPYKYVSKMRASIVVLGPILARVGHAKVSMPGGCTIGSRPIDLHLKGLEAMGVKISQTAGYIEAKAERLHGAHIYMDFPSVGATQNLMMAATLADGVTVIENAAREPEIVDLAILLNEMGAKVKGAGTETITITGVEKLHGTTHNVVQDRIEAGTFMVAAAMTGGDVLIRDAVWEHNRPLIAKLLEMGVEVIEEDEGIRVRSQLENLKAVHVKTLPHPGFPTDMQAQFTALMTVAKGESTMVETVFENRFQHLEEMRRMGLHSEIIRDTARIVGGQPLQGAEVLSTDLRASAALILTGLVAQGETVVGKLVHLDRGYYGFHEKLAQLGAKIQRIEANDEDE</sequence>
<gene>
    <name evidence="1" type="primary">murA1</name>
    <name type="synonym">murA</name>
    <name type="ordered locus">spr1781</name>
</gene>
<dbReference type="EC" id="2.5.1.7" evidence="1"/>
<dbReference type="EMBL" id="AE007317">
    <property type="protein sequence ID" value="AAL00584.1"/>
    <property type="molecule type" value="Genomic_DNA"/>
</dbReference>
<dbReference type="PIR" id="C98094">
    <property type="entry name" value="C98094"/>
</dbReference>
<dbReference type="RefSeq" id="NP_359373.1">
    <property type="nucleotide sequence ID" value="NC_003098.1"/>
</dbReference>
<dbReference type="RefSeq" id="WP_000358027.1">
    <property type="nucleotide sequence ID" value="NC_003098.1"/>
</dbReference>
<dbReference type="SMR" id="Q8DNE8"/>
<dbReference type="STRING" id="171101.spr1781"/>
<dbReference type="KEGG" id="spr:spr1781"/>
<dbReference type="PATRIC" id="fig|171101.6.peg.1922"/>
<dbReference type="eggNOG" id="COG0766">
    <property type="taxonomic scope" value="Bacteria"/>
</dbReference>
<dbReference type="HOGENOM" id="CLU_027387_0_0_9"/>
<dbReference type="SABIO-RK" id="Q8DNE8"/>
<dbReference type="UniPathway" id="UPA00219"/>
<dbReference type="Proteomes" id="UP000000586">
    <property type="component" value="Chromosome"/>
</dbReference>
<dbReference type="GO" id="GO:0005737">
    <property type="term" value="C:cytoplasm"/>
    <property type="evidence" value="ECO:0007669"/>
    <property type="project" value="UniProtKB-SubCell"/>
</dbReference>
<dbReference type="GO" id="GO:0008760">
    <property type="term" value="F:UDP-N-acetylglucosamine 1-carboxyvinyltransferase activity"/>
    <property type="evidence" value="ECO:0007669"/>
    <property type="project" value="UniProtKB-UniRule"/>
</dbReference>
<dbReference type="GO" id="GO:0051301">
    <property type="term" value="P:cell division"/>
    <property type="evidence" value="ECO:0007669"/>
    <property type="project" value="UniProtKB-KW"/>
</dbReference>
<dbReference type="GO" id="GO:0071555">
    <property type="term" value="P:cell wall organization"/>
    <property type="evidence" value="ECO:0007669"/>
    <property type="project" value="UniProtKB-KW"/>
</dbReference>
<dbReference type="GO" id="GO:0009252">
    <property type="term" value="P:peptidoglycan biosynthetic process"/>
    <property type="evidence" value="ECO:0007669"/>
    <property type="project" value="UniProtKB-UniRule"/>
</dbReference>
<dbReference type="GO" id="GO:0008360">
    <property type="term" value="P:regulation of cell shape"/>
    <property type="evidence" value="ECO:0007669"/>
    <property type="project" value="UniProtKB-KW"/>
</dbReference>
<dbReference type="GO" id="GO:0019277">
    <property type="term" value="P:UDP-N-acetylgalactosamine biosynthetic process"/>
    <property type="evidence" value="ECO:0007669"/>
    <property type="project" value="InterPro"/>
</dbReference>
<dbReference type="CDD" id="cd01555">
    <property type="entry name" value="UdpNAET"/>
    <property type="match status" value="1"/>
</dbReference>
<dbReference type="FunFam" id="3.65.10.10:FF:000001">
    <property type="entry name" value="UDP-N-acetylglucosamine 1-carboxyvinyltransferase"/>
    <property type="match status" value="1"/>
</dbReference>
<dbReference type="Gene3D" id="3.65.10.10">
    <property type="entry name" value="Enolpyruvate transferase domain"/>
    <property type="match status" value="2"/>
</dbReference>
<dbReference type="HAMAP" id="MF_00111">
    <property type="entry name" value="MurA"/>
    <property type="match status" value="1"/>
</dbReference>
<dbReference type="InterPro" id="IPR001986">
    <property type="entry name" value="Enolpyruvate_Tfrase_dom"/>
</dbReference>
<dbReference type="InterPro" id="IPR036968">
    <property type="entry name" value="Enolpyruvate_Tfrase_sf"/>
</dbReference>
<dbReference type="InterPro" id="IPR050068">
    <property type="entry name" value="MurA_subfamily"/>
</dbReference>
<dbReference type="InterPro" id="IPR013792">
    <property type="entry name" value="RNA3'P_cycl/enolpyr_Trfase_a/b"/>
</dbReference>
<dbReference type="InterPro" id="IPR005750">
    <property type="entry name" value="UDP_GlcNAc_COvinyl_MurA"/>
</dbReference>
<dbReference type="NCBIfam" id="TIGR01072">
    <property type="entry name" value="murA"/>
    <property type="match status" value="1"/>
</dbReference>
<dbReference type="NCBIfam" id="NF006873">
    <property type="entry name" value="PRK09369.1"/>
    <property type="match status" value="1"/>
</dbReference>
<dbReference type="PANTHER" id="PTHR43783">
    <property type="entry name" value="UDP-N-ACETYLGLUCOSAMINE 1-CARBOXYVINYLTRANSFERASE"/>
    <property type="match status" value="1"/>
</dbReference>
<dbReference type="PANTHER" id="PTHR43783:SF1">
    <property type="entry name" value="UDP-N-ACETYLGLUCOSAMINE 1-CARBOXYVINYLTRANSFERASE"/>
    <property type="match status" value="1"/>
</dbReference>
<dbReference type="Pfam" id="PF00275">
    <property type="entry name" value="EPSP_synthase"/>
    <property type="match status" value="1"/>
</dbReference>
<dbReference type="SUPFAM" id="SSF55205">
    <property type="entry name" value="EPT/RTPC-like"/>
    <property type="match status" value="1"/>
</dbReference>
<organism>
    <name type="scientific">Streptococcus pneumoniae (strain ATCC BAA-255 / R6)</name>
    <dbReference type="NCBI Taxonomy" id="171101"/>
    <lineage>
        <taxon>Bacteria</taxon>
        <taxon>Bacillati</taxon>
        <taxon>Bacillota</taxon>
        <taxon>Bacilli</taxon>
        <taxon>Lactobacillales</taxon>
        <taxon>Streptococcaceae</taxon>
        <taxon>Streptococcus</taxon>
    </lineage>
</organism>
<accession>Q8DNE8</accession>
<keyword id="KW-0131">Cell cycle</keyword>
<keyword id="KW-0132">Cell division</keyword>
<keyword id="KW-0133">Cell shape</keyword>
<keyword id="KW-0961">Cell wall biogenesis/degradation</keyword>
<keyword id="KW-0963">Cytoplasm</keyword>
<keyword id="KW-0573">Peptidoglycan synthesis</keyword>
<keyword id="KW-0670">Pyruvate</keyword>
<keyword id="KW-1185">Reference proteome</keyword>
<keyword id="KW-0808">Transferase</keyword>
<proteinExistence type="inferred from homology"/>
<protein>
    <recommendedName>
        <fullName evidence="1">UDP-N-acetylglucosamine 1-carboxyvinyltransferase 1</fullName>
        <ecNumber evidence="1">2.5.1.7</ecNumber>
    </recommendedName>
    <alternativeName>
        <fullName evidence="1">Enoylpyruvate transferase 1</fullName>
    </alternativeName>
    <alternativeName>
        <fullName evidence="1">UDP-N-acetylglucosamine enolpyruvyl transferase 1</fullName>
        <shortName evidence="1">EPT 1</shortName>
    </alternativeName>
</protein>
<evidence type="ECO:0000255" key="1">
    <source>
        <dbReference type="HAMAP-Rule" id="MF_00111"/>
    </source>
</evidence>
<comment type="function">
    <text evidence="1">Cell wall formation. Adds enolpyruvyl to UDP-N-acetylglucosamine.</text>
</comment>
<comment type="catalytic activity">
    <reaction evidence="1">
        <text>phosphoenolpyruvate + UDP-N-acetyl-alpha-D-glucosamine = UDP-N-acetyl-3-O-(1-carboxyvinyl)-alpha-D-glucosamine + phosphate</text>
        <dbReference type="Rhea" id="RHEA:18681"/>
        <dbReference type="ChEBI" id="CHEBI:43474"/>
        <dbReference type="ChEBI" id="CHEBI:57705"/>
        <dbReference type="ChEBI" id="CHEBI:58702"/>
        <dbReference type="ChEBI" id="CHEBI:68483"/>
        <dbReference type="EC" id="2.5.1.7"/>
    </reaction>
</comment>
<comment type="pathway">
    <text evidence="1">Cell wall biogenesis; peptidoglycan biosynthesis.</text>
</comment>
<comment type="subcellular location">
    <subcellularLocation>
        <location evidence="1">Cytoplasm</location>
    </subcellularLocation>
</comment>
<comment type="similarity">
    <text evidence="1">Belongs to the EPSP synthase family. MurA subfamily.</text>
</comment>